<evidence type="ECO:0000255" key="1">
    <source>
        <dbReference type="HAMAP-Rule" id="MF_00104"/>
    </source>
</evidence>
<reference key="1">
    <citation type="submission" date="2007-07" db="EMBL/GenBank/DDBJ databases">
        <title>Complete sequence of chromosome of Shewanella baltica OS185.</title>
        <authorList>
            <consortium name="US DOE Joint Genome Institute"/>
            <person name="Copeland A."/>
            <person name="Lucas S."/>
            <person name="Lapidus A."/>
            <person name="Barry K."/>
            <person name="Glavina del Rio T."/>
            <person name="Dalin E."/>
            <person name="Tice H."/>
            <person name="Pitluck S."/>
            <person name="Sims D."/>
            <person name="Brettin T."/>
            <person name="Bruce D."/>
            <person name="Detter J.C."/>
            <person name="Han C."/>
            <person name="Schmutz J."/>
            <person name="Larimer F."/>
            <person name="Land M."/>
            <person name="Hauser L."/>
            <person name="Kyrpides N."/>
            <person name="Mikhailova N."/>
            <person name="Brettar I."/>
            <person name="Rodrigues J."/>
            <person name="Konstantinidis K."/>
            <person name="Tiedje J."/>
            <person name="Richardson P."/>
        </authorList>
    </citation>
    <scope>NUCLEOTIDE SEQUENCE [LARGE SCALE GENOMIC DNA]</scope>
    <source>
        <strain>OS185</strain>
    </source>
</reference>
<proteinExistence type="inferred from homology"/>
<comment type="function">
    <text evidence="1">Digests double-stranded RNA. Involved in the processing of primary rRNA transcript to yield the immediate precursors to the large and small rRNAs (23S and 16S). Processes some mRNAs, and tRNAs when they are encoded in the rRNA operon. Processes pre-crRNA and tracrRNA of type II CRISPR loci if present in the organism.</text>
</comment>
<comment type="catalytic activity">
    <reaction evidence="1">
        <text>Endonucleolytic cleavage to 5'-phosphomonoester.</text>
        <dbReference type="EC" id="3.1.26.3"/>
    </reaction>
</comment>
<comment type="cofactor">
    <cofactor evidence="1">
        <name>Mg(2+)</name>
        <dbReference type="ChEBI" id="CHEBI:18420"/>
    </cofactor>
</comment>
<comment type="subunit">
    <text evidence="1">Homodimer.</text>
</comment>
<comment type="subcellular location">
    <subcellularLocation>
        <location evidence="1">Cytoplasm</location>
    </subcellularLocation>
</comment>
<comment type="similarity">
    <text evidence="1">Belongs to the ribonuclease III family.</text>
</comment>
<sequence>MEPIKNLPRLCRTLGYEFKNIELLTQALTHRSAANKHNERLEFLGDSILSIVISDALYHQFPKATEGDLSRMRATLVRGDTLTIIAQEFKLGDYLYLGPGELKSGGFRRESILADAVEAIIGAVYLDSDLEVCRALLLKWYAERLAEIQPGISQKDAKTLLQEHLQGFKKPLPDYQVINIEGDAHDQTFTVECRIEDLSQSVIGVASSRRKAEQIAAAQVLELLKK</sequence>
<gene>
    <name evidence="1" type="primary">rnc</name>
    <name type="ordered locus">Shew185_1245</name>
</gene>
<dbReference type="EC" id="3.1.26.3" evidence="1"/>
<dbReference type="EMBL" id="CP000753">
    <property type="protein sequence ID" value="ABS07396.1"/>
    <property type="molecule type" value="Genomic_DNA"/>
</dbReference>
<dbReference type="RefSeq" id="WP_012088603.1">
    <property type="nucleotide sequence ID" value="NC_009665.1"/>
</dbReference>
<dbReference type="SMR" id="A6WKQ7"/>
<dbReference type="KEGG" id="sbm:Shew185_1245"/>
<dbReference type="HOGENOM" id="CLU_000907_1_1_6"/>
<dbReference type="GO" id="GO:0005737">
    <property type="term" value="C:cytoplasm"/>
    <property type="evidence" value="ECO:0007669"/>
    <property type="project" value="UniProtKB-SubCell"/>
</dbReference>
<dbReference type="GO" id="GO:0003725">
    <property type="term" value="F:double-stranded RNA binding"/>
    <property type="evidence" value="ECO:0007669"/>
    <property type="project" value="TreeGrafter"/>
</dbReference>
<dbReference type="GO" id="GO:0046872">
    <property type="term" value="F:metal ion binding"/>
    <property type="evidence" value="ECO:0007669"/>
    <property type="project" value="UniProtKB-KW"/>
</dbReference>
<dbReference type="GO" id="GO:0004525">
    <property type="term" value="F:ribonuclease III activity"/>
    <property type="evidence" value="ECO:0007669"/>
    <property type="project" value="UniProtKB-UniRule"/>
</dbReference>
<dbReference type="GO" id="GO:0019843">
    <property type="term" value="F:rRNA binding"/>
    <property type="evidence" value="ECO:0007669"/>
    <property type="project" value="UniProtKB-KW"/>
</dbReference>
<dbReference type="GO" id="GO:0006397">
    <property type="term" value="P:mRNA processing"/>
    <property type="evidence" value="ECO:0007669"/>
    <property type="project" value="UniProtKB-UniRule"/>
</dbReference>
<dbReference type="GO" id="GO:0010468">
    <property type="term" value="P:regulation of gene expression"/>
    <property type="evidence" value="ECO:0007669"/>
    <property type="project" value="TreeGrafter"/>
</dbReference>
<dbReference type="GO" id="GO:0006364">
    <property type="term" value="P:rRNA processing"/>
    <property type="evidence" value="ECO:0007669"/>
    <property type="project" value="UniProtKB-UniRule"/>
</dbReference>
<dbReference type="GO" id="GO:0008033">
    <property type="term" value="P:tRNA processing"/>
    <property type="evidence" value="ECO:0007669"/>
    <property type="project" value="UniProtKB-KW"/>
</dbReference>
<dbReference type="CDD" id="cd10845">
    <property type="entry name" value="DSRM_RNAse_III_family"/>
    <property type="match status" value="1"/>
</dbReference>
<dbReference type="CDD" id="cd00593">
    <property type="entry name" value="RIBOc"/>
    <property type="match status" value="1"/>
</dbReference>
<dbReference type="FunFam" id="1.10.1520.10:FF:000001">
    <property type="entry name" value="Ribonuclease 3"/>
    <property type="match status" value="1"/>
</dbReference>
<dbReference type="FunFam" id="3.30.160.20:FF:000003">
    <property type="entry name" value="Ribonuclease 3"/>
    <property type="match status" value="1"/>
</dbReference>
<dbReference type="Gene3D" id="3.30.160.20">
    <property type="match status" value="1"/>
</dbReference>
<dbReference type="Gene3D" id="1.10.1520.10">
    <property type="entry name" value="Ribonuclease III domain"/>
    <property type="match status" value="1"/>
</dbReference>
<dbReference type="HAMAP" id="MF_00104">
    <property type="entry name" value="RNase_III"/>
    <property type="match status" value="1"/>
</dbReference>
<dbReference type="InterPro" id="IPR014720">
    <property type="entry name" value="dsRBD_dom"/>
</dbReference>
<dbReference type="InterPro" id="IPR011907">
    <property type="entry name" value="RNase_III"/>
</dbReference>
<dbReference type="InterPro" id="IPR000999">
    <property type="entry name" value="RNase_III_dom"/>
</dbReference>
<dbReference type="InterPro" id="IPR036389">
    <property type="entry name" value="RNase_III_sf"/>
</dbReference>
<dbReference type="NCBIfam" id="TIGR02191">
    <property type="entry name" value="RNaseIII"/>
    <property type="match status" value="1"/>
</dbReference>
<dbReference type="PANTHER" id="PTHR11207:SF0">
    <property type="entry name" value="RIBONUCLEASE 3"/>
    <property type="match status" value="1"/>
</dbReference>
<dbReference type="PANTHER" id="PTHR11207">
    <property type="entry name" value="RIBONUCLEASE III"/>
    <property type="match status" value="1"/>
</dbReference>
<dbReference type="Pfam" id="PF00035">
    <property type="entry name" value="dsrm"/>
    <property type="match status" value="1"/>
</dbReference>
<dbReference type="Pfam" id="PF14622">
    <property type="entry name" value="Ribonucleas_3_3"/>
    <property type="match status" value="1"/>
</dbReference>
<dbReference type="SMART" id="SM00358">
    <property type="entry name" value="DSRM"/>
    <property type="match status" value="1"/>
</dbReference>
<dbReference type="SMART" id="SM00535">
    <property type="entry name" value="RIBOc"/>
    <property type="match status" value="1"/>
</dbReference>
<dbReference type="SUPFAM" id="SSF54768">
    <property type="entry name" value="dsRNA-binding domain-like"/>
    <property type="match status" value="1"/>
</dbReference>
<dbReference type="SUPFAM" id="SSF69065">
    <property type="entry name" value="RNase III domain-like"/>
    <property type="match status" value="1"/>
</dbReference>
<dbReference type="PROSITE" id="PS50137">
    <property type="entry name" value="DS_RBD"/>
    <property type="match status" value="1"/>
</dbReference>
<dbReference type="PROSITE" id="PS00517">
    <property type="entry name" value="RNASE_3_1"/>
    <property type="match status" value="1"/>
</dbReference>
<dbReference type="PROSITE" id="PS50142">
    <property type="entry name" value="RNASE_3_2"/>
    <property type="match status" value="1"/>
</dbReference>
<accession>A6WKQ7</accession>
<name>RNC_SHEB8</name>
<organism>
    <name type="scientific">Shewanella baltica (strain OS185)</name>
    <dbReference type="NCBI Taxonomy" id="402882"/>
    <lineage>
        <taxon>Bacteria</taxon>
        <taxon>Pseudomonadati</taxon>
        <taxon>Pseudomonadota</taxon>
        <taxon>Gammaproteobacteria</taxon>
        <taxon>Alteromonadales</taxon>
        <taxon>Shewanellaceae</taxon>
        <taxon>Shewanella</taxon>
    </lineage>
</organism>
<feature type="chain" id="PRO_1000075809" description="Ribonuclease 3">
    <location>
        <begin position="1"/>
        <end position="226"/>
    </location>
</feature>
<feature type="domain" description="RNase III" evidence="1">
    <location>
        <begin position="7"/>
        <end position="129"/>
    </location>
</feature>
<feature type="domain" description="DRBM" evidence="1">
    <location>
        <begin position="156"/>
        <end position="226"/>
    </location>
</feature>
<feature type="active site" evidence="1">
    <location>
        <position position="46"/>
    </location>
</feature>
<feature type="active site" evidence="1">
    <location>
        <position position="118"/>
    </location>
</feature>
<feature type="binding site" evidence="1">
    <location>
        <position position="42"/>
    </location>
    <ligand>
        <name>Mg(2+)</name>
        <dbReference type="ChEBI" id="CHEBI:18420"/>
    </ligand>
</feature>
<feature type="binding site" evidence="1">
    <location>
        <position position="115"/>
    </location>
    <ligand>
        <name>Mg(2+)</name>
        <dbReference type="ChEBI" id="CHEBI:18420"/>
    </ligand>
</feature>
<feature type="binding site" evidence="1">
    <location>
        <position position="118"/>
    </location>
    <ligand>
        <name>Mg(2+)</name>
        <dbReference type="ChEBI" id="CHEBI:18420"/>
    </ligand>
</feature>
<keyword id="KW-0963">Cytoplasm</keyword>
<keyword id="KW-0255">Endonuclease</keyword>
<keyword id="KW-0378">Hydrolase</keyword>
<keyword id="KW-0460">Magnesium</keyword>
<keyword id="KW-0479">Metal-binding</keyword>
<keyword id="KW-0507">mRNA processing</keyword>
<keyword id="KW-0540">Nuclease</keyword>
<keyword id="KW-0694">RNA-binding</keyword>
<keyword id="KW-0698">rRNA processing</keyword>
<keyword id="KW-0699">rRNA-binding</keyword>
<keyword id="KW-0819">tRNA processing</keyword>
<protein>
    <recommendedName>
        <fullName evidence="1">Ribonuclease 3</fullName>
        <ecNumber evidence="1">3.1.26.3</ecNumber>
    </recommendedName>
    <alternativeName>
        <fullName evidence="1">Ribonuclease III</fullName>
        <shortName evidence="1">RNase III</shortName>
    </alternativeName>
</protein>